<evidence type="ECO:0000250" key="1"/>
<evidence type="ECO:0000255" key="2">
    <source>
        <dbReference type="HAMAP-Rule" id="MF_00768"/>
    </source>
</evidence>
<evidence type="ECO:0000305" key="3"/>
<comment type="function">
    <text evidence="1">Repressor involved in the biosynthesis of the osmoprotectant glycine betaine. It represses transcription of the choline transporter BetT and the genes of BetAB involved in the synthesis of glycine betaine (By similarity).</text>
</comment>
<comment type="pathway">
    <text>Amine and polyamine biosynthesis; betaine biosynthesis via choline pathway [regulation].</text>
</comment>
<comment type="sequence caution" evidence="3">
    <conflict type="erroneous initiation">
        <sequence resource="EMBL-CDS" id="ABA53008"/>
    </conflict>
    <text>Extended N-terminus.</text>
</comment>
<proteinExistence type="inferred from homology"/>
<organism>
    <name type="scientific">Burkholderia pseudomallei (strain 1710b)</name>
    <dbReference type="NCBI Taxonomy" id="320372"/>
    <lineage>
        <taxon>Bacteria</taxon>
        <taxon>Pseudomonadati</taxon>
        <taxon>Pseudomonadota</taxon>
        <taxon>Betaproteobacteria</taxon>
        <taxon>Burkholderiales</taxon>
        <taxon>Burkholderiaceae</taxon>
        <taxon>Burkholderia</taxon>
        <taxon>pseudomallei group</taxon>
    </lineage>
</organism>
<feature type="chain" id="PRO_0000257731" description="HTH-type transcriptional regulator BetI">
    <location>
        <begin position="1"/>
        <end position="195"/>
    </location>
</feature>
<feature type="domain" description="HTH tetR-type" evidence="2">
    <location>
        <begin position="8"/>
        <end position="68"/>
    </location>
</feature>
<feature type="DNA-binding region" description="H-T-H motif" evidence="2">
    <location>
        <begin position="31"/>
        <end position="50"/>
    </location>
</feature>
<name>BETI_BURP1</name>
<protein>
    <recommendedName>
        <fullName evidence="2">HTH-type transcriptional regulator BetI</fullName>
    </recommendedName>
</protein>
<accession>Q3JLL9</accession>
<keyword id="KW-0238">DNA-binding</keyword>
<keyword id="KW-0678">Repressor</keyword>
<keyword id="KW-0804">Transcription</keyword>
<keyword id="KW-0805">Transcription regulation</keyword>
<sequence>MPKLGMREIRRAQLIDATLRSIDEAGLPGTTLASVAQRANISTGIVSHYFGDKDGLLEATMRHVLRDLWAATTRRRAAASDAPRARLRAVVAANFDDTQISAPVMKTWLAFWSQSMHEPTLRRLQRVNTRRLHSNLCAEFAKTLPRARAREAASGLAALIDGLWLRGALAGEPLDTKAALKLANDYIDQLLAPRV</sequence>
<gene>
    <name evidence="2" type="primary">betI</name>
    <name type="ordered locus">BURPS1710b_A0375</name>
</gene>
<dbReference type="EMBL" id="CP000125">
    <property type="protein sequence ID" value="ABA53008.1"/>
    <property type="status" value="ALT_INIT"/>
    <property type="molecule type" value="Genomic_DNA"/>
</dbReference>
<dbReference type="RefSeq" id="WP_004202513.1">
    <property type="nucleotide sequence ID" value="NC_007435.1"/>
</dbReference>
<dbReference type="SMR" id="Q3JLL9"/>
<dbReference type="EnsemblBacteria" id="ABA53008">
    <property type="protein sequence ID" value="ABA53008"/>
    <property type="gene ID" value="BURPS1710b_A0375"/>
</dbReference>
<dbReference type="GeneID" id="93063521"/>
<dbReference type="KEGG" id="bpm:BURPS1710b_A0375"/>
<dbReference type="HOGENOM" id="CLU_069356_15_4_4"/>
<dbReference type="UniPathway" id="UPA00529"/>
<dbReference type="Proteomes" id="UP000002700">
    <property type="component" value="Chromosome II"/>
</dbReference>
<dbReference type="GO" id="GO:0003700">
    <property type="term" value="F:DNA-binding transcription factor activity"/>
    <property type="evidence" value="ECO:0007669"/>
    <property type="project" value="UniProtKB-UniRule"/>
</dbReference>
<dbReference type="GO" id="GO:0000976">
    <property type="term" value="F:transcription cis-regulatory region binding"/>
    <property type="evidence" value="ECO:0007669"/>
    <property type="project" value="TreeGrafter"/>
</dbReference>
<dbReference type="GO" id="GO:0019285">
    <property type="term" value="P:glycine betaine biosynthetic process from choline"/>
    <property type="evidence" value="ECO:0007669"/>
    <property type="project" value="UniProtKB-UniRule"/>
</dbReference>
<dbReference type="GO" id="GO:0045892">
    <property type="term" value="P:negative regulation of DNA-templated transcription"/>
    <property type="evidence" value="ECO:0007669"/>
    <property type="project" value="UniProtKB-UniRule"/>
</dbReference>
<dbReference type="Gene3D" id="1.10.357.10">
    <property type="entry name" value="Tetracycline Repressor, domain 2"/>
    <property type="match status" value="1"/>
</dbReference>
<dbReference type="HAMAP" id="MF_00768">
    <property type="entry name" value="HTH_type_BetI"/>
    <property type="match status" value="1"/>
</dbReference>
<dbReference type="InterPro" id="IPR039538">
    <property type="entry name" value="BetI_C"/>
</dbReference>
<dbReference type="InterPro" id="IPR023772">
    <property type="entry name" value="DNA-bd_HTH_TetR-type_CS"/>
</dbReference>
<dbReference type="InterPro" id="IPR009057">
    <property type="entry name" value="Homeodomain-like_sf"/>
</dbReference>
<dbReference type="InterPro" id="IPR050109">
    <property type="entry name" value="HTH-type_TetR-like_transc_reg"/>
</dbReference>
<dbReference type="InterPro" id="IPR001647">
    <property type="entry name" value="HTH_TetR"/>
</dbReference>
<dbReference type="InterPro" id="IPR036271">
    <property type="entry name" value="Tet_transcr_reg_TetR-rel_C_sf"/>
</dbReference>
<dbReference type="InterPro" id="IPR017757">
    <property type="entry name" value="Tscrpt_rep_BetI"/>
</dbReference>
<dbReference type="NCBIfam" id="TIGR03384">
    <property type="entry name" value="betaine_BetI"/>
    <property type="match status" value="1"/>
</dbReference>
<dbReference type="NCBIfam" id="NF001978">
    <property type="entry name" value="PRK00767.1"/>
    <property type="match status" value="1"/>
</dbReference>
<dbReference type="PANTHER" id="PTHR30055:SF234">
    <property type="entry name" value="HTH-TYPE TRANSCRIPTIONAL REGULATOR BETI"/>
    <property type="match status" value="1"/>
</dbReference>
<dbReference type="PANTHER" id="PTHR30055">
    <property type="entry name" value="HTH-TYPE TRANSCRIPTIONAL REGULATOR RUTR"/>
    <property type="match status" value="1"/>
</dbReference>
<dbReference type="Pfam" id="PF13977">
    <property type="entry name" value="TetR_C_6"/>
    <property type="match status" value="1"/>
</dbReference>
<dbReference type="Pfam" id="PF00440">
    <property type="entry name" value="TetR_N"/>
    <property type="match status" value="1"/>
</dbReference>
<dbReference type="SUPFAM" id="SSF46689">
    <property type="entry name" value="Homeodomain-like"/>
    <property type="match status" value="1"/>
</dbReference>
<dbReference type="SUPFAM" id="SSF48498">
    <property type="entry name" value="Tetracyclin repressor-like, C-terminal domain"/>
    <property type="match status" value="1"/>
</dbReference>
<dbReference type="PROSITE" id="PS01081">
    <property type="entry name" value="HTH_TETR_1"/>
    <property type="match status" value="1"/>
</dbReference>
<dbReference type="PROSITE" id="PS50977">
    <property type="entry name" value="HTH_TETR_2"/>
    <property type="match status" value="1"/>
</dbReference>
<reference key="1">
    <citation type="journal article" date="2010" name="Genome Biol. Evol.">
        <title>Continuing evolution of Burkholderia mallei through genome reduction and large-scale rearrangements.</title>
        <authorList>
            <person name="Losada L."/>
            <person name="Ronning C.M."/>
            <person name="DeShazer D."/>
            <person name="Woods D."/>
            <person name="Fedorova N."/>
            <person name="Kim H.S."/>
            <person name="Shabalina S.A."/>
            <person name="Pearson T.R."/>
            <person name="Brinkac L."/>
            <person name="Tan P."/>
            <person name="Nandi T."/>
            <person name="Crabtree J."/>
            <person name="Badger J."/>
            <person name="Beckstrom-Sternberg S."/>
            <person name="Saqib M."/>
            <person name="Schutzer S.E."/>
            <person name="Keim P."/>
            <person name="Nierman W.C."/>
        </authorList>
    </citation>
    <scope>NUCLEOTIDE SEQUENCE [LARGE SCALE GENOMIC DNA]</scope>
    <source>
        <strain>1710b</strain>
    </source>
</reference>